<sequence>MAARGRRAWLSMLLGLVLGFVLASRLVLPRASELKRVGPRRRPSPEGCRPGQEASQPGGARGDARGAQLWPQGSAAEGVPRDRNFLFVGVMTAQKYLQTRAVAAYRTWSKTIPGKVEFFSSEGSDTSIPIPVVPLRGVDDSYPPQKKSFMMLKYMHDHYLDKYEWFMRADDDVYIKGDRLESFLRSLNSSEPLFLGQTGLGTTEEMGKLALEPGENFCMGGPGVILSREVLRRMAPHIGKCLREMYTTHEDVEVGRCVRRFAGVQCVWSYEMQQLFYENYEQNKKGYIRDLHSSKIHRAITLHPNKNPPYQYRLHSYMLSRKIAELRHRTIQLHREIVLMSKYSSTEIQKEDLQLGIPPSFMRFQARQREEILEWEFLTGKYLYSATDGQPPRRGMDSAQREALDDIVMQVMEMINANAKTRGRIIDFKEIQYGYRRVNPMYGAEYILDLLLLYKKHKGKKMTVPVRRHAYLQQTFSKMQFVEHEELDAQELADRINQDSGSLSFLSNSLKKLVAFQLPGSKTEHKEPKEKKINILIPLSGRFDMFVRFMGNFEKTCLIPNLNVKLVILLFNSDSNPDKAKQVELMRDYRVKYPKADMQVLPVSGGFSRALALEVGSSQFNNESLLFFCDVDLVFTAEFLQRCRANTVLGQQIYFPIIFSQYDPKIVYSGKVPSDNHFAFTQKTGFWRNYGFGITCIYKGDLVRVGGFDVSIQGWGLEDVDLFNKVVQAGLKTFRSQEVGVVHIHHPVVCDPNLDPKQYKMCLGSKASTFGSTQQLAEMWLEKNDPSYSKGGSHGSARTA</sequence>
<proteinExistence type="evidence at transcript level"/>
<protein>
    <recommendedName>
        <fullName>Chondroitin sulfate synthase 1</fullName>
        <ecNumber evidence="1">2.4.1.175</ecNumber>
        <ecNumber evidence="1">2.4.1.226</ecNumber>
    </recommendedName>
    <alternativeName>
        <fullName>Chondroitin glucuronyltransferase 1</fullName>
    </alternativeName>
    <alternativeName>
        <fullName>Chondroitin synthase 1</fullName>
        <shortName>ChSy-1</shortName>
    </alternativeName>
    <alternativeName>
        <fullName>Glucuronosyl-N-acetylgalactosaminyl-proteoglycan 4-beta-N-acetylgalactosaminyltransferase 1</fullName>
    </alternativeName>
    <alternativeName>
        <fullName>N-acetylgalactosaminyl-proteoglycan 3-beta-glucuronosyltransferase 1</fullName>
    </alternativeName>
    <alternativeName>
        <fullName>N-acetylgalactosaminyltransferase 1</fullName>
    </alternativeName>
</protein>
<dbReference type="EC" id="2.4.1.175" evidence="1"/>
<dbReference type="EC" id="2.4.1.226" evidence="1"/>
<dbReference type="EMBL" id="AK129255">
    <property type="protein sequence ID" value="BAC98065.1"/>
    <property type="status" value="ALT_INIT"/>
    <property type="molecule type" value="mRNA"/>
</dbReference>
<dbReference type="CCDS" id="CCDS39978.1"/>
<dbReference type="RefSeq" id="NP_001074632.1">
    <property type="nucleotide sequence ID" value="NM_001081163.2"/>
</dbReference>
<dbReference type="SMR" id="Q6ZQ11"/>
<dbReference type="BioGRID" id="234731">
    <property type="interactions" value="2"/>
</dbReference>
<dbReference type="FunCoup" id="Q6ZQ11">
    <property type="interactions" value="1127"/>
</dbReference>
<dbReference type="STRING" id="10090.ENSMUSP00000047487"/>
<dbReference type="CAZy" id="GT31">
    <property type="family name" value="Glycosyltransferase Family 31"/>
</dbReference>
<dbReference type="CAZy" id="GT7">
    <property type="family name" value="Glycosyltransferase Family 7"/>
</dbReference>
<dbReference type="GlyCosmos" id="Q6ZQ11">
    <property type="glycosylation" value="2 sites, No reported glycans"/>
</dbReference>
<dbReference type="GlyGen" id="Q6ZQ11">
    <property type="glycosylation" value="2 sites, 1 N-linked glycan (1 site)"/>
</dbReference>
<dbReference type="iPTMnet" id="Q6ZQ11"/>
<dbReference type="PhosphoSitePlus" id="Q6ZQ11"/>
<dbReference type="PaxDb" id="10090-ENSMUSP00000047487"/>
<dbReference type="PeptideAtlas" id="Q6ZQ11"/>
<dbReference type="ProteomicsDB" id="281672"/>
<dbReference type="Pumba" id="Q6ZQ11"/>
<dbReference type="Antibodypedia" id="43966">
    <property type="antibodies" value="138 antibodies from 23 providers"/>
</dbReference>
<dbReference type="Ensembl" id="ENSMUST00000036372.8">
    <property type="protein sequence ID" value="ENSMUSP00000047487.7"/>
    <property type="gene ID" value="ENSMUSG00000032640.11"/>
</dbReference>
<dbReference type="GeneID" id="269941"/>
<dbReference type="KEGG" id="mmu:269941"/>
<dbReference type="UCSC" id="uc009hhb.1">
    <property type="organism name" value="mouse"/>
</dbReference>
<dbReference type="AGR" id="MGI:2681120"/>
<dbReference type="CTD" id="22856"/>
<dbReference type="MGI" id="MGI:2681120">
    <property type="gene designation" value="Chsy1"/>
</dbReference>
<dbReference type="VEuPathDB" id="HostDB:ENSMUSG00000032640"/>
<dbReference type="eggNOG" id="KOG3588">
    <property type="taxonomic scope" value="Eukaryota"/>
</dbReference>
<dbReference type="GeneTree" id="ENSGT01050000244857"/>
<dbReference type="HOGENOM" id="CLU_016244_2_0_1"/>
<dbReference type="InParanoid" id="Q6ZQ11"/>
<dbReference type="OMA" id="PAKNFLF"/>
<dbReference type="OrthoDB" id="431432at2759"/>
<dbReference type="PhylomeDB" id="Q6ZQ11"/>
<dbReference type="TreeFam" id="TF318303"/>
<dbReference type="BRENDA" id="2.4.1.175">
    <property type="organism ID" value="3474"/>
</dbReference>
<dbReference type="BRENDA" id="2.4.1.226">
    <property type="organism ID" value="3474"/>
</dbReference>
<dbReference type="Reactome" id="R-MMU-2022870">
    <property type="pathway name" value="Chondroitin sulfate biosynthesis"/>
</dbReference>
<dbReference type="BioGRID-ORCS" id="269941">
    <property type="hits" value="1 hit in 78 CRISPR screens"/>
</dbReference>
<dbReference type="ChiTaRS" id="Chsy1">
    <property type="organism name" value="mouse"/>
</dbReference>
<dbReference type="PRO" id="PR:Q6ZQ11"/>
<dbReference type="Proteomes" id="UP000000589">
    <property type="component" value="Chromosome 7"/>
</dbReference>
<dbReference type="RNAct" id="Q6ZQ11">
    <property type="molecule type" value="protein"/>
</dbReference>
<dbReference type="Bgee" id="ENSMUSG00000032640">
    <property type="expression patterns" value="Expressed in humerus cartilage element and 230 other cell types or tissues"/>
</dbReference>
<dbReference type="GO" id="GO:0005576">
    <property type="term" value="C:extracellular region"/>
    <property type="evidence" value="ECO:0007669"/>
    <property type="project" value="UniProtKB-SubCell"/>
</dbReference>
<dbReference type="GO" id="GO:0005794">
    <property type="term" value="C:Golgi apparatus"/>
    <property type="evidence" value="ECO:0000314"/>
    <property type="project" value="MGI"/>
</dbReference>
<dbReference type="GO" id="GO:0032580">
    <property type="term" value="C:Golgi cisterna membrane"/>
    <property type="evidence" value="ECO:0007669"/>
    <property type="project" value="UniProtKB-SubCell"/>
</dbReference>
<dbReference type="GO" id="GO:0047238">
    <property type="term" value="F:glucuronosyl-N-acetylgalactosaminyl-proteoglycan 4-beta-N-acetylgalactosaminyltransferase activity"/>
    <property type="evidence" value="ECO:0000316"/>
    <property type="project" value="MGI"/>
</dbReference>
<dbReference type="GO" id="GO:0016757">
    <property type="term" value="F:glycosyltransferase activity"/>
    <property type="evidence" value="ECO:0000315"/>
    <property type="project" value="MGI"/>
</dbReference>
<dbReference type="GO" id="GO:0046872">
    <property type="term" value="F:metal ion binding"/>
    <property type="evidence" value="ECO:0007669"/>
    <property type="project" value="UniProtKB-KW"/>
</dbReference>
<dbReference type="GO" id="GO:0050510">
    <property type="term" value="F:N-acetylgalactosaminyl-proteoglycan 3-beta-glucuronosyltransferase activity"/>
    <property type="evidence" value="ECO:0000316"/>
    <property type="project" value="MGI"/>
</dbReference>
<dbReference type="GO" id="GO:0060349">
    <property type="term" value="P:bone morphogenesis"/>
    <property type="evidence" value="ECO:0000315"/>
    <property type="project" value="MGI"/>
</dbReference>
<dbReference type="GO" id="GO:0051216">
    <property type="term" value="P:cartilage development"/>
    <property type="evidence" value="ECO:0000315"/>
    <property type="project" value="MGI"/>
</dbReference>
<dbReference type="GO" id="GO:0002063">
    <property type="term" value="P:chondrocyte development"/>
    <property type="evidence" value="ECO:0000315"/>
    <property type="project" value="MGI"/>
</dbReference>
<dbReference type="GO" id="GO:0050650">
    <property type="term" value="P:chondroitin sulfate proteoglycan biosynthetic process"/>
    <property type="evidence" value="ECO:0000316"/>
    <property type="project" value="MGI"/>
</dbReference>
<dbReference type="GO" id="GO:0030279">
    <property type="term" value="P:negative regulation of ossification"/>
    <property type="evidence" value="ECO:0007669"/>
    <property type="project" value="Ensembl"/>
</dbReference>
<dbReference type="GO" id="GO:0045880">
    <property type="term" value="P:positive regulation of smoothened signaling pathway"/>
    <property type="evidence" value="ECO:0000315"/>
    <property type="project" value="MGI"/>
</dbReference>
<dbReference type="GO" id="GO:0009954">
    <property type="term" value="P:proximal/distal pattern formation"/>
    <property type="evidence" value="ECO:0000315"/>
    <property type="project" value="MGI"/>
</dbReference>
<dbReference type="GO" id="GO:0031667">
    <property type="term" value="P:response to nutrient levels"/>
    <property type="evidence" value="ECO:0007669"/>
    <property type="project" value="Ensembl"/>
</dbReference>
<dbReference type="GO" id="GO:0051923">
    <property type="term" value="P:sulfation"/>
    <property type="evidence" value="ECO:0000315"/>
    <property type="project" value="MGI"/>
</dbReference>
<dbReference type="FunFam" id="3.90.550.10:FF:000060">
    <property type="entry name" value="Hexosyltransferase"/>
    <property type="match status" value="1"/>
</dbReference>
<dbReference type="FunFam" id="3.90.550.50:FF:000004">
    <property type="entry name" value="Hexosyltransferase"/>
    <property type="match status" value="1"/>
</dbReference>
<dbReference type="Gene3D" id="3.90.550.50">
    <property type="match status" value="1"/>
</dbReference>
<dbReference type="Gene3D" id="3.90.550.10">
    <property type="entry name" value="Spore Coat Polysaccharide Biosynthesis Protein SpsA, Chain A"/>
    <property type="match status" value="1"/>
</dbReference>
<dbReference type="InterPro" id="IPR008428">
    <property type="entry name" value="Chond_GalNAc"/>
</dbReference>
<dbReference type="InterPro" id="IPR051227">
    <property type="entry name" value="CS_glycosyltransferase"/>
</dbReference>
<dbReference type="InterPro" id="IPR029044">
    <property type="entry name" value="Nucleotide-diphossugar_trans"/>
</dbReference>
<dbReference type="PANTHER" id="PTHR12369:SF42">
    <property type="entry name" value="CHONDROITIN SULFATE SYNTHASE 1"/>
    <property type="match status" value="1"/>
</dbReference>
<dbReference type="PANTHER" id="PTHR12369">
    <property type="entry name" value="CHONDROITIN SYNTHASE"/>
    <property type="match status" value="1"/>
</dbReference>
<dbReference type="Pfam" id="PF05679">
    <property type="entry name" value="CHGN"/>
    <property type="match status" value="1"/>
</dbReference>
<dbReference type="SUPFAM" id="SSF53448">
    <property type="entry name" value="Nucleotide-diphospho-sugar transferases"/>
    <property type="match status" value="2"/>
</dbReference>
<feature type="chain" id="PRO_0000189559" description="Chondroitin sulfate synthase 1">
    <location>
        <begin position="1"/>
        <end position="800"/>
    </location>
</feature>
<feature type="topological domain" description="Cytoplasmic" evidence="2">
    <location>
        <begin position="1"/>
        <end position="7"/>
    </location>
</feature>
<feature type="transmembrane region" description="Helical; Signal-anchor for type II membrane protein" evidence="2">
    <location>
        <begin position="8"/>
        <end position="28"/>
    </location>
</feature>
<feature type="topological domain" description="Lumenal" evidence="2">
    <location>
        <begin position="29"/>
        <end position="800"/>
    </location>
</feature>
<feature type="region of interest" description="Disordered" evidence="3">
    <location>
        <begin position="36"/>
        <end position="66"/>
    </location>
</feature>
<feature type="binding site" evidence="2">
    <location>
        <position position="632"/>
    </location>
    <ligand>
        <name>a divalent metal cation</name>
        <dbReference type="ChEBI" id="CHEBI:60240"/>
    </ligand>
</feature>
<feature type="binding site" evidence="2">
    <location>
        <position position="746"/>
    </location>
    <ligand>
        <name>a divalent metal cation</name>
        <dbReference type="ChEBI" id="CHEBI:60240"/>
    </ligand>
</feature>
<feature type="glycosylation site" description="N-linked (GlcNAc...) asparagine" evidence="2">
    <location>
        <position position="188"/>
    </location>
</feature>
<feature type="glycosylation site" description="N-linked (GlcNAc...) asparagine" evidence="2">
    <location>
        <position position="622"/>
    </location>
</feature>
<organism>
    <name type="scientific">Mus musculus</name>
    <name type="common">Mouse</name>
    <dbReference type="NCBI Taxonomy" id="10090"/>
    <lineage>
        <taxon>Eukaryota</taxon>
        <taxon>Metazoa</taxon>
        <taxon>Chordata</taxon>
        <taxon>Craniata</taxon>
        <taxon>Vertebrata</taxon>
        <taxon>Euteleostomi</taxon>
        <taxon>Mammalia</taxon>
        <taxon>Eutheria</taxon>
        <taxon>Euarchontoglires</taxon>
        <taxon>Glires</taxon>
        <taxon>Rodentia</taxon>
        <taxon>Myomorpha</taxon>
        <taxon>Muroidea</taxon>
        <taxon>Muridae</taxon>
        <taxon>Murinae</taxon>
        <taxon>Mus</taxon>
        <taxon>Mus</taxon>
    </lineage>
</organism>
<accession>Q6ZQ11</accession>
<name>CHSS1_MOUSE</name>
<comment type="function">
    <text evidence="1">Has both beta-1,3-glucuronic acid and beta-1,4-N-acetylgalactosamine transferase activity. Transfers glucuronic acid (GlcUA) from UDP-GlcUA and N-acetylgalactosamine (GalNAc) from UDP-GalNAc to the non-reducing end of the elongating chondroitin polymer. Involved in the negative control of osteogenesis likely through the modulation of NOTCH signaling.</text>
</comment>
<comment type="catalytic activity">
    <reaction evidence="1">
        <text>3-O-(beta-D-GlcA-(1-&gt;3)-beta-D-GalNAc-(1-&gt;4)-beta-D-GlcA-(1-&gt;3)-beta-D-Gal-(1-&gt;3)-beta-D-Gal-(1-&gt;4)-beta-D-Xyl)-L-seryl-[protein] + UDP-N-acetyl-alpha-D-galactosamine = 3-O-(beta-D-GalNAc-(1-&gt;4)-beta-D-GlcA-(1-&gt;3)-beta-D-GalNAc-(1-&gt;4)-beta-D-GlcA-(1-&gt;3)-beta-D-Gal-(1-&gt;3)-beta-D-Gal-(1-&gt;4)-beta-D-Xyl)-L-seryl-[protein] + UDP + H(+)</text>
        <dbReference type="Rhea" id="RHEA:20800"/>
        <dbReference type="Rhea" id="RHEA-COMP:14058"/>
        <dbReference type="Rhea" id="RHEA-COMP:14059"/>
        <dbReference type="ChEBI" id="CHEBI:15378"/>
        <dbReference type="ChEBI" id="CHEBI:58223"/>
        <dbReference type="ChEBI" id="CHEBI:67138"/>
        <dbReference type="ChEBI" id="CHEBI:138442"/>
        <dbReference type="ChEBI" id="CHEBI:138443"/>
        <dbReference type="EC" id="2.4.1.175"/>
    </reaction>
    <physiologicalReaction direction="left-to-right" evidence="1">
        <dbReference type="Rhea" id="RHEA:20801"/>
    </physiologicalReaction>
</comment>
<comment type="catalytic activity">
    <reaction evidence="1">
        <text>3-O-{beta-D-GlcA-(1-&gt;3)-[beta-D-GalNAc-(1-&gt;4)-beta-D-GlcA-(1-&gt;3)](n)-beta-D-GalNAc-(1-&gt;4)-beta-D-GlcA-(1-&gt;3)-beta-D-Gal-(1-&gt;3)-beta-D-Gal-(1-&gt;4)-beta-D-Xyl}-L-seryl-[protein] + UDP-N-acetyl-alpha-D-galactosamine = 3-O-{[beta-D-GalNAc-(1-&gt;4)-beta-D-GlcA-(1-&gt;3)](n+1)-beta-D-GalNAc-(1-&gt;4)-beta-D-GlcA-(1-&gt;3)-beta-D-Gal-(1-&gt;3)-beta-D-Gal-(1-&gt;4)-beta-D-Xyl}-L-seryl-[protein] + UDP + H(+)</text>
        <dbReference type="Rhea" id="RHEA:55000"/>
        <dbReference type="Rhea" id="RHEA-COMP:14060"/>
        <dbReference type="Rhea" id="RHEA-COMP:14301"/>
        <dbReference type="ChEBI" id="CHEBI:15378"/>
        <dbReference type="ChEBI" id="CHEBI:58223"/>
        <dbReference type="ChEBI" id="CHEBI:67138"/>
        <dbReference type="ChEBI" id="CHEBI:138444"/>
        <dbReference type="ChEBI" id="CHEBI:138445"/>
        <dbReference type="EC" id="2.4.1.175"/>
    </reaction>
    <physiologicalReaction direction="left-to-right" evidence="1">
        <dbReference type="Rhea" id="RHEA:55001"/>
    </physiologicalReaction>
</comment>
<comment type="catalytic activity">
    <reaction evidence="1">
        <text>3-O-(beta-D-GalNAc-(1-&gt;4)-beta-D-GlcA-(1-&gt;3)-beta-D-Gal-(1-&gt;3)-beta-D-Gal-(1-&gt;4)-beta-D-Xyl)-L-seryl-[protein] + UDP-alpha-D-glucuronate = 3-O-(beta-D-GlcA-(1-&gt;3)-beta-D-GalNAc-(1-&gt;4)-beta-D-GlcA-(1-&gt;3)-beta-D-Gal-(1-&gt;3)-beta-D-Gal-(1-&gt;4)-beta-D-Xyl)-L-seryl-[protein] + UDP + H(+)</text>
        <dbReference type="Rhea" id="RHEA:23428"/>
        <dbReference type="Rhea" id="RHEA-COMP:12575"/>
        <dbReference type="Rhea" id="RHEA-COMP:14058"/>
        <dbReference type="ChEBI" id="CHEBI:15378"/>
        <dbReference type="ChEBI" id="CHEBI:58052"/>
        <dbReference type="ChEBI" id="CHEBI:58223"/>
        <dbReference type="ChEBI" id="CHEBI:132105"/>
        <dbReference type="ChEBI" id="CHEBI:138442"/>
        <dbReference type="EC" id="2.4.1.226"/>
    </reaction>
    <physiologicalReaction direction="left-to-right" evidence="1">
        <dbReference type="Rhea" id="RHEA:23429"/>
    </physiologicalReaction>
</comment>
<comment type="catalytic activity">
    <reaction evidence="1">
        <text>3-O-{[beta-D-GalNAc-(1-&gt;4)-beta-D-GlcA-(1-&gt;3)](n)-beta-D-GalNAc-(1-&gt;4)-beta-D-GlcA-(1-&gt;3)-beta-D-Gal-(1-&gt;3)-beta-D-Gal-(1-&gt;4)-beta-D-Xyl}-L-seryl-[protein] + UDP-alpha-D-glucuronate = 3-O-{beta-D-GlcA-(1-&gt;3)-[beta-D-GalNAc-(1-&gt;4)-beta-D-GlcA-(1-&gt;3)](n)-beta-D-GalNAc-(1-&gt;4)-beta-D-GlcA-(1-&gt;3)-beta-D-Gal-(1-&gt;3)-beta-D-Gal-(1-&gt;4)-beta-D-Xyl}-L-seryl-[protein] + UDP + H(+)</text>
        <dbReference type="Rhea" id="RHEA:54996"/>
        <dbReference type="Rhea" id="RHEA-COMP:14060"/>
        <dbReference type="Rhea" id="RHEA-COMP:14061"/>
        <dbReference type="ChEBI" id="CHEBI:15378"/>
        <dbReference type="ChEBI" id="CHEBI:58052"/>
        <dbReference type="ChEBI" id="CHEBI:58223"/>
        <dbReference type="ChEBI" id="CHEBI:138444"/>
        <dbReference type="ChEBI" id="CHEBI:138445"/>
        <dbReference type="EC" id="2.4.1.226"/>
    </reaction>
    <physiologicalReaction direction="left-to-right" evidence="1">
        <dbReference type="Rhea" id="RHEA:54997"/>
    </physiologicalReaction>
</comment>
<comment type="cofactor">
    <cofactor evidence="1">
        <name>Co(2+)</name>
        <dbReference type="ChEBI" id="CHEBI:48828"/>
    </cofactor>
    <cofactor evidence="1">
        <name>Mn(2+)</name>
        <dbReference type="ChEBI" id="CHEBI:29035"/>
    </cofactor>
    <cofactor evidence="1">
        <name>Cd(2+)</name>
        <dbReference type="ChEBI" id="CHEBI:48775"/>
    </cofactor>
    <text evidence="1">Divalent metal cations. Highest activities are measured with Co(2+), Mn(2+) and Cd(2+).</text>
</comment>
<comment type="subcellular location">
    <subcellularLocation>
        <location evidence="1">Golgi apparatus</location>
        <location evidence="1">Golgi stack membrane</location>
        <topology evidence="1">Single-pass type II membrane protein</topology>
    </subcellularLocation>
    <subcellularLocation>
        <location evidence="1">Secreted</location>
    </subcellularLocation>
</comment>
<comment type="similarity">
    <text evidence="4">Belongs to the chondroitin N-acetylgalactosaminyltransferase family.</text>
</comment>
<comment type="sequence caution" evidence="4">
    <conflict type="erroneous initiation">
        <sequence resource="EMBL-CDS" id="BAC98065"/>
    </conflict>
    <text>Extended N-terminus.</text>
</comment>
<keyword id="KW-0325">Glycoprotein</keyword>
<keyword id="KW-0333">Golgi apparatus</keyword>
<keyword id="KW-0472">Membrane</keyword>
<keyword id="KW-0479">Metal-binding</keyword>
<keyword id="KW-1185">Reference proteome</keyword>
<keyword id="KW-0964">Secreted</keyword>
<keyword id="KW-0735">Signal-anchor</keyword>
<keyword id="KW-0808">Transferase</keyword>
<keyword id="KW-0812">Transmembrane</keyword>
<keyword id="KW-1133">Transmembrane helix</keyword>
<reference key="1">
    <citation type="journal article" date="2003" name="DNA Res.">
        <title>Prediction of the coding sequences of mouse homologues of KIAA gene: III. The complete nucleotide sequences of 500 mouse KIAA-homologous cDNAs identified by screening of terminal sequences of cDNA clones randomly sampled from size-fractionated libraries.</title>
        <authorList>
            <person name="Okazaki N."/>
            <person name="Kikuno R."/>
            <person name="Ohara R."/>
            <person name="Inamoto S."/>
            <person name="Koseki H."/>
            <person name="Hiraoka S."/>
            <person name="Saga Y."/>
            <person name="Nagase T."/>
            <person name="Ohara O."/>
            <person name="Koga H."/>
        </authorList>
    </citation>
    <scope>NUCLEOTIDE SEQUENCE [LARGE SCALE MRNA]</scope>
    <source>
        <tissue>Embryonic tail</tissue>
    </source>
</reference>
<evidence type="ECO:0000250" key="1">
    <source>
        <dbReference type="UniProtKB" id="Q86X52"/>
    </source>
</evidence>
<evidence type="ECO:0000255" key="2"/>
<evidence type="ECO:0000256" key="3">
    <source>
        <dbReference type="SAM" id="MobiDB-lite"/>
    </source>
</evidence>
<evidence type="ECO:0000305" key="4"/>
<gene>
    <name type="primary">Chsy1</name>
    <name type="synonym">Kiaa0990</name>
</gene>